<proteinExistence type="evidence at protein level"/>
<keyword id="KW-0002">3D-structure</keyword>
<keyword id="KW-0378">Hydrolase</keyword>
<keyword id="KW-0433">Leucine-rich repeat</keyword>
<keyword id="KW-0520">NAD</keyword>
<keyword id="KW-0611">Plant defense</keyword>
<keyword id="KW-0677">Repeat</keyword>
<name>ROQ1_NICBE</name>
<feature type="chain" id="PRO_0000448793" description="Disease resistance protein Roq1">
    <location>
        <begin position="1"/>
        <end position="1306"/>
    </location>
</feature>
<feature type="domain" description="TIR" evidence="4">
    <location>
        <begin position="10"/>
        <end position="179"/>
    </location>
</feature>
<feature type="domain" description="NB-ARC" evidence="3">
    <location>
        <begin position="198"/>
        <end position="417"/>
    </location>
</feature>
<feature type="repeat" description="LRR 1" evidence="3">
    <location>
        <begin position="200"/>
        <end position="224"/>
    </location>
</feature>
<feature type="repeat" description="LRR 2" evidence="3">
    <location>
        <begin position="252"/>
        <end position="275"/>
    </location>
</feature>
<feature type="repeat" description="LRR 3" evidence="3">
    <location>
        <begin position="417"/>
        <end position="440"/>
    </location>
</feature>
<feature type="repeat" description="LRR 4" evidence="3">
    <location>
        <begin position="599"/>
        <end position="622"/>
    </location>
</feature>
<feature type="repeat" description="LRR 5" evidence="3">
    <location>
        <begin position="645"/>
        <end position="669"/>
    </location>
</feature>
<feature type="repeat" description="LRR 6" evidence="3">
    <location>
        <begin position="670"/>
        <end position="693"/>
    </location>
</feature>
<feature type="repeat" description="LRR 7" evidence="3">
    <location>
        <begin position="716"/>
        <end position="739"/>
    </location>
</feature>
<feature type="repeat" description="LRR 8" evidence="3">
    <location>
        <begin position="741"/>
        <end position="763"/>
    </location>
</feature>
<feature type="repeat" description="LRR 9" evidence="3">
    <location>
        <begin position="784"/>
        <end position="807"/>
    </location>
</feature>
<feature type="repeat" description="LRR 10" evidence="3">
    <location>
        <begin position="808"/>
        <end position="831"/>
    </location>
</feature>
<feature type="repeat" description="LRR 11" evidence="3">
    <location>
        <begin position="832"/>
        <end position="857"/>
    </location>
</feature>
<feature type="repeat" description="LRR 12" evidence="3">
    <location>
        <begin position="878"/>
        <end position="902"/>
    </location>
</feature>
<feature type="repeat" description="LRR 13" evidence="3">
    <location>
        <begin position="904"/>
        <end position="926"/>
    </location>
</feature>
<feature type="repeat" description="LRR 14" evidence="3">
    <location>
        <begin position="927"/>
        <end position="949"/>
    </location>
</feature>
<feature type="repeat" description="LRR 15" evidence="3">
    <location>
        <begin position="961"/>
        <end position="983"/>
    </location>
</feature>
<feature type="repeat" description="LRR 16" evidence="3">
    <location>
        <begin position="987"/>
        <end position="1010"/>
    </location>
</feature>
<feature type="repeat" description="LRR 17" evidence="3">
    <location>
        <begin position="1013"/>
        <end position="1036"/>
    </location>
</feature>
<feature type="repeat" description="LRR 18" evidence="3">
    <location>
        <begin position="1045"/>
        <end position="1070"/>
    </location>
</feature>
<feature type="active site" evidence="4">
    <location>
        <position position="86"/>
    </location>
</feature>
<feature type="binding site" evidence="2">
    <location>
        <begin position="19"/>
        <end position="24"/>
    </location>
    <ligand>
        <name>NAD(+)</name>
        <dbReference type="ChEBI" id="CHEBI:57540"/>
    </ligand>
</feature>
<feature type="binding site" evidence="2">
    <location>
        <position position="52"/>
    </location>
    <ligand>
        <name>NAD(+)</name>
        <dbReference type="ChEBI" id="CHEBI:57540"/>
    </ligand>
</feature>
<feature type="site" description="Important for ADPR cyclization" evidence="11">
    <location>
        <position position="82"/>
    </location>
</feature>
<feature type="mutagenesis site" description="Loss of NAD(+) hydrolase activity." evidence="7">
    <original>W</original>
    <variation>A</variation>
    <location>
        <position position="82"/>
    </location>
</feature>
<protein>
    <recommendedName>
        <fullName evidence="9">Disease resistance protein Roq1</fullName>
    </recommendedName>
    <alternativeName>
        <fullName evidence="9">2' cyclic ADP-D-ribose synthase</fullName>
        <shortName evidence="9">2'cADPR synthase Roq1</shortName>
        <ecNumber evidence="7">3.2.2.-</ecNumber>
    </alternativeName>
    <alternativeName>
        <fullName>NAD(+) hydrolase RPV1</fullName>
        <ecNumber evidence="10">3.2.2.6</ecNumber>
    </alternativeName>
    <alternativeName>
        <fullName evidence="8">Recognition of XopQ 1 protein</fullName>
    </alternativeName>
</protein>
<comment type="function">
    <text evidence="5 6 7">Disease resistance (R) protein that specifically recognizes the Xanthomonas and Pseudomonas effector proteins XopQ and HopQ1, and triggers cell death (PubMed:28891100). An NAD(+) hydrolase (NADase): in response to activation, catalyzes cleavage of NAD(+) into ADP-D-ribose (ADPR) and nicotinamide; NAD(+) cleavage triggers a defense system that promotes cell death (PubMed:31439792). Makes small amounts of 2' cyclic ADPR (2'cADPR) (PubMed:36048923).</text>
</comment>
<comment type="catalytic activity">
    <reaction evidence="10">
        <text>NAD(+) + H2O = ADP-D-ribose + nicotinamide + H(+)</text>
        <dbReference type="Rhea" id="RHEA:16301"/>
        <dbReference type="ChEBI" id="CHEBI:15377"/>
        <dbReference type="ChEBI" id="CHEBI:15378"/>
        <dbReference type="ChEBI" id="CHEBI:17154"/>
        <dbReference type="ChEBI" id="CHEBI:57540"/>
        <dbReference type="ChEBI" id="CHEBI:57967"/>
        <dbReference type="EC" id="3.2.2.6"/>
    </reaction>
    <physiologicalReaction direction="left-to-right" evidence="10">
        <dbReference type="Rhea" id="RHEA:16302"/>
    </physiologicalReaction>
</comment>
<comment type="catalytic activity">
    <reaction evidence="7">
        <text>NAD(+) = 2'cADPR + nicotinamide + H(+)</text>
        <dbReference type="Rhea" id="RHEA:75299"/>
        <dbReference type="ChEBI" id="CHEBI:15378"/>
        <dbReference type="ChEBI" id="CHEBI:17154"/>
        <dbReference type="ChEBI" id="CHEBI:57540"/>
        <dbReference type="ChEBI" id="CHEBI:194248"/>
    </reaction>
    <physiologicalReaction direction="left-to-right" evidence="7">
        <dbReference type="Rhea" id="RHEA:75300"/>
    </physiologicalReaction>
</comment>
<comment type="subunit">
    <text evidence="1">Homodimer.</text>
</comment>
<comment type="interaction">
    <interactant intactId="EBI-26584875">
        <id>A0A290U7C4</id>
    </interactant>
    <interactant intactId="EBI-26584891">
        <id>Q5QA88</id>
        <label>xopQ</label>
    </interactant>
    <organismsDiffer>true</organismsDiffer>
    <experiments>2</experiments>
</comment>
<comment type="domain">
    <text evidence="4 7">The TIR domain mediates NAD(+) hydrolase (NADase) activity. Self-association of TIR domains is required for NADase activity (By similarity). The TIR domain alone is active and (slowly) produces 2'cADPR (PubMed:36048923).</text>
</comment>
<comment type="similarity">
    <text evidence="9">Belongs to the disease resistance TIR-NB-LRR family.</text>
</comment>
<gene>
    <name evidence="8" type="primary">ROQ1</name>
</gene>
<sequence length="1306" mass="150462">MLTSSSHHGRSYDVFLSFRGEDTRKTFVGHLFNALIEKGIHTFMDDKELKRGKSISSELMKAIGESRFAVVVFSKNYASSTWCLEELVKILEIHEKFELIVVPVFYDVDPSTVRKQNGEYAVCFTKFEANLVDDRDKVLRWREALTKVANISGHDLRNTYNGDESKCIQQILKDIFDKFCFSISITNRDLVGIESQIKKLSSLLRMDLKGVRLVGIWGMGGVGKTTAARALFNRYYQNFESACFLEDVKEYLQHHTLLYLQKTLLSKLLKVEFVDCTDTEEMCVILKRRLCSKKVLVVLDDVNHNDQLDKLVGAEDWFGSGSRIVITTRDMKLLKNHDVHETYEIKVLEKDEAIELFNLHAFKRSSPEKEFKELLNLVVDYTGGLPLALKVLGSLLYKEDLDVWISTIDRLKDNPEGEIMATLKISFDGLRDYEKSIFLDIACFFRGYNQRDMTALFHASGFHPVLGVKTLVEKSLIFILEDKIQMHDLMQEMGRQIAVQESPMRRIYRPEDVKDACIGDMRKEAIEGLLLTEPEQFEEGELEYMYSAEALKKTRRLRILVKEYYNRGFDEPVAYLPNSLLWLEWRNYSSNSFPSNFEPSKLVYLTMKGSSIIELWNGAKRLAFLTTLDLSYCHKLIQTPDFRMITNLERLILSSCDALVEVHPSVGFLKNLILLNMDHCISLERLPAIIQSECLEVLDLNYCFNLKMFPEVERNMTHLKKLDLTSTGIRELPASIEHLSSLENLQMHSCNQLVSLPSSIWRFRNLKISECEKLGSLPEIHGNSNCTRELILKLVSIKELPTSIGNLTSLNFLEICNCKTISSLSSSIWGLTSLTTLKLLDCRKLKNLPGIPNAINHLSGHGLQLLLTLEQPTIYERLDLLRIIDMSWCSCISSLPHNIWMLKFLRILCISYCSRLEYLPENLGHLEHLEELLADGTGILRLPSSVARLNKLEVLSFRKKFAIGPKVQYSSSMLNLPDDVFGSLGSLGSVVKLNLSGNGFCNLPETMNQLFCLEYLDITFCQRLEALPELPPSIKELYVDEHLALRIMEDLVIKCKELNLIAVTKIEYQNFYRWLDSIWSDVSELLENSQKQQLDDMLQLIPFSYLSTAKREEVLKIVIHGTRIPEWFRWQDRSATTMSVNLPEYWYTENFLGFAICCSCCFYHSARSYDVEFEGSMHHYNYDSSYWKEYEEPSYDFYERDSIEITAKLTPRHKGMRTEELKKVCSFSMNVLRRATAVPNMCFAFFPFNSLCHISNLQANNPNDYGIFETCLSPGDIRHRGKQWGFNLVYKDETGGSVTHEMLINR</sequence>
<accession>A0A290U7C4</accession>
<reference key="1">
    <citation type="journal article" date="2017" name="Plant J.">
        <title>Roq1 mediates recognition of the Xanthomonas and Pseudomonas effector proteins XopQ and HopQ1.</title>
        <authorList>
            <person name="Schultink A."/>
            <person name="Qi T."/>
            <person name="Lee A."/>
            <person name="Steinbrenner A.D."/>
            <person name="Staskawicz B."/>
        </authorList>
    </citation>
    <scope>NUCLEOTIDE SEQUENCE [MRNA]</scope>
</reference>
<reference key="2">
    <citation type="journal article" date="2019" name="Science">
        <title>NAD+ cleavage activity by animal and plant TIR domains in cell death pathways.</title>
        <authorList>
            <person name="Horsefield S."/>
            <person name="Burdett H."/>
            <person name="Zhang X."/>
            <person name="Manik M.K."/>
            <person name="Shi Y."/>
            <person name="Chen J."/>
            <person name="Qi T."/>
            <person name="Gilley J."/>
            <person name="Lai J.S."/>
            <person name="Rank M.X."/>
            <person name="Casey L.W."/>
            <person name="Gu W."/>
            <person name="Ericsson D.J."/>
            <person name="Foley G."/>
            <person name="Hughes R.O."/>
            <person name="Bosanac T."/>
            <person name="von Itzstein M."/>
            <person name="Rathjen J.P."/>
            <person name="Nanson J.D."/>
            <person name="Boden M."/>
            <person name="Dry I.B."/>
            <person name="Williams S.J."/>
            <person name="Staskawicz B.J."/>
            <person name="Coleman M.P."/>
            <person name="Ve T."/>
            <person name="Dodds P.N."/>
            <person name="Kobe B."/>
        </authorList>
    </citation>
    <scope>FUNCTION</scope>
    <scope>CATALYTIC ACTIVITY</scope>
</reference>
<reference key="3">
    <citation type="journal article" date="2022" name="Science">
        <title>Cyclic ADP ribose isomers: Production, chemical structures, and immune signaling.</title>
        <authorList>
            <person name="Manik M.K."/>
            <person name="Shi Y."/>
            <person name="Li S."/>
            <person name="Zaydman M.A."/>
            <person name="Damaraju N."/>
            <person name="Eastman S."/>
            <person name="Smith T.G."/>
            <person name="Gu W."/>
            <person name="Masic V."/>
            <person name="Mosaiab T."/>
            <person name="Weagley J.S."/>
            <person name="Hancock S.J."/>
            <person name="Vasquez E."/>
            <person name="Hartley-Tassell L."/>
            <person name="Kargios N."/>
            <person name="Maruta N."/>
            <person name="Lim B.Y.J."/>
            <person name="Burdett H."/>
            <person name="Landsberg M.J."/>
            <person name="Schembri M.A."/>
            <person name="Prokes I."/>
            <person name="Song L."/>
            <person name="Grant M."/>
            <person name="DiAntonio A."/>
            <person name="Nanson J.D."/>
            <person name="Guo M."/>
            <person name="Milbrandt J."/>
            <person name="Ve T."/>
            <person name="Kobe B."/>
        </authorList>
    </citation>
    <scope>FUNCTION</scope>
    <scope>CATALYTIC ACTIVITY</scope>
    <scope>DOMAIN</scope>
    <scope>MUTAGENESIS OF TRP-82</scope>
</reference>
<dbReference type="EC" id="3.2.2.-" evidence="7"/>
<dbReference type="EC" id="3.2.2.6" evidence="10"/>
<dbReference type="EMBL" id="MF773579">
    <property type="protein sequence ID" value="ATD14363.1"/>
    <property type="molecule type" value="mRNA"/>
</dbReference>
<dbReference type="PDB" id="7JLU">
    <property type="method" value="EM"/>
    <property type="resolution" value="3.80 A"/>
    <property type="chains" value="A=1-1306"/>
</dbReference>
<dbReference type="PDB" id="7JLV">
    <property type="method" value="EM"/>
    <property type="resolution" value="3.80 A"/>
    <property type="chains" value="A/B/D/G=1-1306"/>
</dbReference>
<dbReference type="PDB" id="7JLX">
    <property type="method" value="EM"/>
    <property type="resolution" value="4.60 A"/>
    <property type="chains" value="A/B/C/D=1-1306"/>
</dbReference>
<dbReference type="PDBsum" id="7JLU"/>
<dbReference type="PDBsum" id="7JLV"/>
<dbReference type="PDBsum" id="7JLX"/>
<dbReference type="EMDB" id="EMD-22380"/>
<dbReference type="EMDB" id="EMD-22381"/>
<dbReference type="EMDB" id="EMD-22383"/>
<dbReference type="SMR" id="A0A290U7C4"/>
<dbReference type="IntAct" id="A0A290U7C4">
    <property type="interactions" value="1"/>
</dbReference>
<dbReference type="GO" id="GO:0043531">
    <property type="term" value="F:ADP binding"/>
    <property type="evidence" value="ECO:0007669"/>
    <property type="project" value="InterPro"/>
</dbReference>
<dbReference type="GO" id="GO:0061809">
    <property type="term" value="F:NAD+ nucleosidase activity, cyclic ADP-ribose generating"/>
    <property type="evidence" value="ECO:0007669"/>
    <property type="project" value="UniProtKB-EC"/>
</dbReference>
<dbReference type="GO" id="GO:0006952">
    <property type="term" value="P:defense response"/>
    <property type="evidence" value="ECO:0007669"/>
    <property type="project" value="UniProtKB-KW"/>
</dbReference>
<dbReference type="GO" id="GO:0007165">
    <property type="term" value="P:signal transduction"/>
    <property type="evidence" value="ECO:0007669"/>
    <property type="project" value="InterPro"/>
</dbReference>
<dbReference type="FunFam" id="3.40.50.10140:FF:000007">
    <property type="entry name" value="Disease resistance protein (TIR-NBS-LRR class)"/>
    <property type="match status" value="1"/>
</dbReference>
<dbReference type="Gene3D" id="1.10.8.430">
    <property type="entry name" value="Helical domain of apoptotic protease-activating factors"/>
    <property type="match status" value="1"/>
</dbReference>
<dbReference type="Gene3D" id="3.40.50.300">
    <property type="entry name" value="P-loop containing nucleotide triphosphate hydrolases"/>
    <property type="match status" value="1"/>
</dbReference>
<dbReference type="Gene3D" id="3.80.10.10">
    <property type="entry name" value="Ribonuclease Inhibitor"/>
    <property type="match status" value="3"/>
</dbReference>
<dbReference type="Gene3D" id="3.40.50.10140">
    <property type="entry name" value="Toll/interleukin-1 receptor homology (TIR) domain"/>
    <property type="match status" value="1"/>
</dbReference>
<dbReference type="InterPro" id="IPR042197">
    <property type="entry name" value="Apaf_helical"/>
</dbReference>
<dbReference type="InterPro" id="IPR045344">
    <property type="entry name" value="C-JID"/>
</dbReference>
<dbReference type="InterPro" id="IPR044974">
    <property type="entry name" value="Disease_R_plants"/>
</dbReference>
<dbReference type="InterPro" id="IPR032675">
    <property type="entry name" value="LRR_dom_sf"/>
</dbReference>
<dbReference type="InterPro" id="IPR002182">
    <property type="entry name" value="NB-ARC"/>
</dbReference>
<dbReference type="InterPro" id="IPR027417">
    <property type="entry name" value="P-loop_NTPase"/>
</dbReference>
<dbReference type="InterPro" id="IPR000157">
    <property type="entry name" value="TIR_dom"/>
</dbReference>
<dbReference type="InterPro" id="IPR035897">
    <property type="entry name" value="Toll_tir_struct_dom_sf"/>
</dbReference>
<dbReference type="PANTHER" id="PTHR11017:SF536">
    <property type="entry name" value="ADP-RIBOSYL CYCLASE_CYCLIC ADP-RIBOSE HYDROLASE"/>
    <property type="match status" value="1"/>
</dbReference>
<dbReference type="PANTHER" id="PTHR11017">
    <property type="entry name" value="LEUCINE-RICH REPEAT-CONTAINING PROTEIN"/>
    <property type="match status" value="1"/>
</dbReference>
<dbReference type="Pfam" id="PF20160">
    <property type="entry name" value="C-JID"/>
    <property type="match status" value="1"/>
</dbReference>
<dbReference type="Pfam" id="PF23286">
    <property type="entry name" value="LRR_13"/>
    <property type="match status" value="1"/>
</dbReference>
<dbReference type="Pfam" id="PF00931">
    <property type="entry name" value="NB-ARC"/>
    <property type="match status" value="1"/>
</dbReference>
<dbReference type="Pfam" id="PF01582">
    <property type="entry name" value="TIR"/>
    <property type="match status" value="1"/>
</dbReference>
<dbReference type="Pfam" id="PF23282">
    <property type="entry name" value="WHD_ROQ1"/>
    <property type="match status" value="1"/>
</dbReference>
<dbReference type="PRINTS" id="PR00364">
    <property type="entry name" value="DISEASERSIST"/>
</dbReference>
<dbReference type="SMART" id="SM00255">
    <property type="entry name" value="TIR"/>
    <property type="match status" value="1"/>
</dbReference>
<dbReference type="SUPFAM" id="SSF52058">
    <property type="entry name" value="L domain-like"/>
    <property type="match status" value="2"/>
</dbReference>
<dbReference type="SUPFAM" id="SSF52540">
    <property type="entry name" value="P-loop containing nucleoside triphosphate hydrolases"/>
    <property type="match status" value="1"/>
</dbReference>
<dbReference type="SUPFAM" id="SSF52200">
    <property type="entry name" value="Toll/Interleukin receptor TIR domain"/>
    <property type="match status" value="1"/>
</dbReference>
<dbReference type="PROSITE" id="PS50104">
    <property type="entry name" value="TIR"/>
    <property type="match status" value="1"/>
</dbReference>
<evidence type="ECO:0000250" key="1">
    <source>
        <dbReference type="UniProtKB" id="A0A009IHW8"/>
    </source>
</evidence>
<evidence type="ECO:0000250" key="2">
    <source>
        <dbReference type="UniProtKB" id="V9M398"/>
    </source>
</evidence>
<evidence type="ECO:0000255" key="3"/>
<evidence type="ECO:0000255" key="4">
    <source>
        <dbReference type="PROSITE-ProRule" id="PRU00204"/>
    </source>
</evidence>
<evidence type="ECO:0000269" key="5">
    <source>
    </source>
</evidence>
<evidence type="ECO:0000269" key="6">
    <source>
    </source>
</evidence>
<evidence type="ECO:0000269" key="7">
    <source>
    </source>
</evidence>
<evidence type="ECO:0000303" key="8">
    <source>
    </source>
</evidence>
<evidence type="ECO:0000305" key="9"/>
<evidence type="ECO:0000305" key="10">
    <source>
    </source>
</evidence>
<evidence type="ECO:0000305" key="11">
    <source>
    </source>
</evidence>
<organism>
    <name type="scientific">Nicotiana benthamiana</name>
    <dbReference type="NCBI Taxonomy" id="4100"/>
    <lineage>
        <taxon>Eukaryota</taxon>
        <taxon>Viridiplantae</taxon>
        <taxon>Streptophyta</taxon>
        <taxon>Embryophyta</taxon>
        <taxon>Tracheophyta</taxon>
        <taxon>Spermatophyta</taxon>
        <taxon>Magnoliopsida</taxon>
        <taxon>eudicotyledons</taxon>
        <taxon>Gunneridae</taxon>
        <taxon>Pentapetalae</taxon>
        <taxon>asterids</taxon>
        <taxon>lamiids</taxon>
        <taxon>Solanales</taxon>
        <taxon>Solanaceae</taxon>
        <taxon>Nicotianoideae</taxon>
        <taxon>Nicotianeae</taxon>
        <taxon>Nicotiana</taxon>
    </lineage>
</organism>